<comment type="function">
    <text evidence="1">Catalyzes the isomerization between 2-isopropylmalate and 3-isopropylmalate, via the formation of 2-isopropylmaleate.</text>
</comment>
<comment type="catalytic activity">
    <reaction evidence="1">
        <text>(2R,3S)-3-isopropylmalate = (2S)-2-isopropylmalate</text>
        <dbReference type="Rhea" id="RHEA:32287"/>
        <dbReference type="ChEBI" id="CHEBI:1178"/>
        <dbReference type="ChEBI" id="CHEBI:35121"/>
        <dbReference type="EC" id="4.2.1.33"/>
    </reaction>
</comment>
<comment type="pathway">
    <text evidence="1">Amino-acid biosynthesis; L-leucine biosynthesis; L-leucine from 3-methyl-2-oxobutanoate: step 2/4.</text>
</comment>
<comment type="subunit">
    <text evidence="1">Heterodimer of LeuC and LeuD.</text>
</comment>
<comment type="similarity">
    <text evidence="1">Belongs to the LeuD family. LeuD type 1 subfamily.</text>
</comment>
<organism>
    <name type="scientific">Karelsulcia muelleri (strain GWSS)</name>
    <name type="common">Sulcia muelleri</name>
    <dbReference type="NCBI Taxonomy" id="444179"/>
    <lineage>
        <taxon>Bacteria</taxon>
        <taxon>Pseudomonadati</taxon>
        <taxon>Bacteroidota</taxon>
        <taxon>Flavobacteriia</taxon>
        <taxon>Flavobacteriales</taxon>
        <taxon>Candidatus Karelsulcia</taxon>
    </lineage>
</organism>
<proteinExistence type="inferred from homology"/>
<accession>A8Z5R9</accession>
<feature type="chain" id="PRO_1000084273" description="3-isopropylmalate dehydratase small subunit">
    <location>
        <begin position="1"/>
        <end position="195"/>
    </location>
</feature>
<protein>
    <recommendedName>
        <fullName evidence="1">3-isopropylmalate dehydratase small subunit</fullName>
        <ecNumber evidence="1">4.2.1.33</ecNumber>
    </recommendedName>
    <alternativeName>
        <fullName evidence="1">Alpha-IPM isomerase</fullName>
        <shortName evidence="1">IPMI</shortName>
    </alternativeName>
    <alternativeName>
        <fullName evidence="1">Isopropylmalate isomerase</fullName>
    </alternativeName>
</protein>
<name>LEUD_KARMG</name>
<dbReference type="EC" id="4.2.1.33" evidence="1"/>
<dbReference type="EMBL" id="CP000770">
    <property type="protein sequence ID" value="ABS30470.1"/>
    <property type="molecule type" value="Genomic_DNA"/>
</dbReference>
<dbReference type="SMR" id="A8Z5R9"/>
<dbReference type="STRING" id="444179.SMGWSS_041"/>
<dbReference type="KEGG" id="smg:SMGWSS_041"/>
<dbReference type="HOGENOM" id="CLU_081378_0_3_10"/>
<dbReference type="UniPathway" id="UPA00048">
    <property type="reaction ID" value="UER00071"/>
</dbReference>
<dbReference type="Proteomes" id="UP000000781">
    <property type="component" value="Chromosome"/>
</dbReference>
<dbReference type="GO" id="GO:0009316">
    <property type="term" value="C:3-isopropylmalate dehydratase complex"/>
    <property type="evidence" value="ECO:0007669"/>
    <property type="project" value="InterPro"/>
</dbReference>
<dbReference type="GO" id="GO:0003861">
    <property type="term" value="F:3-isopropylmalate dehydratase activity"/>
    <property type="evidence" value="ECO:0007669"/>
    <property type="project" value="UniProtKB-UniRule"/>
</dbReference>
<dbReference type="GO" id="GO:0009098">
    <property type="term" value="P:L-leucine biosynthetic process"/>
    <property type="evidence" value="ECO:0007669"/>
    <property type="project" value="UniProtKB-UniRule"/>
</dbReference>
<dbReference type="CDD" id="cd01577">
    <property type="entry name" value="IPMI_Swivel"/>
    <property type="match status" value="1"/>
</dbReference>
<dbReference type="FunFam" id="3.20.19.10:FF:000003">
    <property type="entry name" value="3-isopropylmalate dehydratase small subunit"/>
    <property type="match status" value="1"/>
</dbReference>
<dbReference type="Gene3D" id="3.20.19.10">
    <property type="entry name" value="Aconitase, domain 4"/>
    <property type="match status" value="1"/>
</dbReference>
<dbReference type="HAMAP" id="MF_01031">
    <property type="entry name" value="LeuD_type1"/>
    <property type="match status" value="1"/>
</dbReference>
<dbReference type="InterPro" id="IPR004431">
    <property type="entry name" value="3-IsopropMal_deHydase_ssu"/>
</dbReference>
<dbReference type="InterPro" id="IPR015928">
    <property type="entry name" value="Aconitase/3IPM_dehydase_swvl"/>
</dbReference>
<dbReference type="InterPro" id="IPR000573">
    <property type="entry name" value="AconitaseA/IPMdHydase_ssu_swvl"/>
</dbReference>
<dbReference type="InterPro" id="IPR033940">
    <property type="entry name" value="IPMI_Swivel"/>
</dbReference>
<dbReference type="InterPro" id="IPR050075">
    <property type="entry name" value="LeuD"/>
</dbReference>
<dbReference type="NCBIfam" id="TIGR00171">
    <property type="entry name" value="leuD"/>
    <property type="match status" value="1"/>
</dbReference>
<dbReference type="NCBIfam" id="NF002458">
    <property type="entry name" value="PRK01641.1"/>
    <property type="match status" value="1"/>
</dbReference>
<dbReference type="PANTHER" id="PTHR43345:SF5">
    <property type="entry name" value="3-ISOPROPYLMALATE DEHYDRATASE SMALL SUBUNIT"/>
    <property type="match status" value="1"/>
</dbReference>
<dbReference type="PANTHER" id="PTHR43345">
    <property type="entry name" value="3-ISOPROPYLMALATE DEHYDRATASE SMALL SUBUNIT 2-RELATED-RELATED"/>
    <property type="match status" value="1"/>
</dbReference>
<dbReference type="Pfam" id="PF00694">
    <property type="entry name" value="Aconitase_C"/>
    <property type="match status" value="1"/>
</dbReference>
<dbReference type="SUPFAM" id="SSF52016">
    <property type="entry name" value="LeuD/IlvD-like"/>
    <property type="match status" value="1"/>
</dbReference>
<reference key="1">
    <citation type="journal article" date="2007" name="Proc. Natl. Acad. Sci. U.S.A.">
        <title>Parallel genomic evolution and metabolic interdependence in an ancient symbiosis.</title>
        <authorList>
            <person name="McCutcheon J.P."/>
            <person name="Moran N.A."/>
        </authorList>
    </citation>
    <scope>NUCLEOTIDE SEQUENCE [LARGE SCALE GENOMIC DNA]</scope>
    <source>
        <strain>GWSS</strain>
    </source>
</reference>
<keyword id="KW-0028">Amino-acid biosynthesis</keyword>
<keyword id="KW-0100">Branched-chain amino acid biosynthesis</keyword>
<keyword id="KW-0432">Leucine biosynthesis</keyword>
<keyword id="KW-0456">Lyase</keyword>
<gene>
    <name evidence="1" type="primary">leuD</name>
    <name type="ordered locus">SMGWSS_041</name>
</gene>
<sequence>MEKFITLFSTAVPLFIDNIDTDQIIPARFLKLTTKSDFGKNLFRDWRYDSNGKIKKNFILNKKKYSGNILITGKNFGCGSSREHAAWAIRDYGFKVVISNIFADIFKQNALNNGLLTIELKKDFINLIYKKIFLNPNILFEINLEQQYVKFENNKELFKIDDFKKKCFINGYDDIELLFSIKKKIEIFEKKNIYN</sequence>
<evidence type="ECO:0000255" key="1">
    <source>
        <dbReference type="HAMAP-Rule" id="MF_01031"/>
    </source>
</evidence>